<protein>
    <recommendedName>
        <fullName evidence="1">Small ribosomal subunit protein uS7</fullName>
    </recommendedName>
    <alternativeName>
        <fullName evidence="2">30S ribosomal protein S7</fullName>
    </alternativeName>
</protein>
<sequence length="156" mass="17604">MPRRRVIGQRKILPDPKFGSELLAKFVNILMVDGKKSTAESIVYSALETLAQRSGKSELEAFEVALENVRPTVEVKSRRVGGSTYQVPVEVRPVRRNALAMRWIVEAARKRGDKSMALRLANELSDAAENKGTAVKKREDVHRMAEANKAFAHYRW</sequence>
<dbReference type="EMBL" id="AM933172">
    <property type="protein sequence ID" value="CAR34850.1"/>
    <property type="molecule type" value="Genomic_DNA"/>
</dbReference>
<dbReference type="RefSeq" id="WP_001138043.1">
    <property type="nucleotide sequence ID" value="NC_011294.1"/>
</dbReference>
<dbReference type="SMR" id="B5R298"/>
<dbReference type="GeneID" id="93778657"/>
<dbReference type="KEGG" id="set:SEN3275"/>
<dbReference type="HOGENOM" id="CLU_072226_1_1_6"/>
<dbReference type="Proteomes" id="UP000000613">
    <property type="component" value="Chromosome"/>
</dbReference>
<dbReference type="GO" id="GO:0015935">
    <property type="term" value="C:small ribosomal subunit"/>
    <property type="evidence" value="ECO:0007669"/>
    <property type="project" value="InterPro"/>
</dbReference>
<dbReference type="GO" id="GO:0019843">
    <property type="term" value="F:rRNA binding"/>
    <property type="evidence" value="ECO:0007669"/>
    <property type="project" value="UniProtKB-UniRule"/>
</dbReference>
<dbReference type="GO" id="GO:0003735">
    <property type="term" value="F:structural constituent of ribosome"/>
    <property type="evidence" value="ECO:0007669"/>
    <property type="project" value="InterPro"/>
</dbReference>
<dbReference type="GO" id="GO:0000049">
    <property type="term" value="F:tRNA binding"/>
    <property type="evidence" value="ECO:0007669"/>
    <property type="project" value="UniProtKB-UniRule"/>
</dbReference>
<dbReference type="GO" id="GO:0006412">
    <property type="term" value="P:translation"/>
    <property type="evidence" value="ECO:0007669"/>
    <property type="project" value="UniProtKB-UniRule"/>
</dbReference>
<dbReference type="CDD" id="cd14869">
    <property type="entry name" value="uS7_Bacteria"/>
    <property type="match status" value="1"/>
</dbReference>
<dbReference type="FunFam" id="1.10.455.10:FF:000001">
    <property type="entry name" value="30S ribosomal protein S7"/>
    <property type="match status" value="1"/>
</dbReference>
<dbReference type="Gene3D" id="1.10.455.10">
    <property type="entry name" value="Ribosomal protein S7 domain"/>
    <property type="match status" value="1"/>
</dbReference>
<dbReference type="HAMAP" id="MF_00480_B">
    <property type="entry name" value="Ribosomal_uS7_B"/>
    <property type="match status" value="1"/>
</dbReference>
<dbReference type="InterPro" id="IPR000235">
    <property type="entry name" value="Ribosomal_uS7"/>
</dbReference>
<dbReference type="InterPro" id="IPR005717">
    <property type="entry name" value="Ribosomal_uS7_bac/org-type"/>
</dbReference>
<dbReference type="InterPro" id="IPR020606">
    <property type="entry name" value="Ribosomal_uS7_CS"/>
</dbReference>
<dbReference type="InterPro" id="IPR023798">
    <property type="entry name" value="Ribosomal_uS7_dom"/>
</dbReference>
<dbReference type="InterPro" id="IPR036823">
    <property type="entry name" value="Ribosomal_uS7_dom_sf"/>
</dbReference>
<dbReference type="NCBIfam" id="TIGR01029">
    <property type="entry name" value="rpsG_bact"/>
    <property type="match status" value="1"/>
</dbReference>
<dbReference type="PANTHER" id="PTHR11205">
    <property type="entry name" value="RIBOSOMAL PROTEIN S7"/>
    <property type="match status" value="1"/>
</dbReference>
<dbReference type="Pfam" id="PF00177">
    <property type="entry name" value="Ribosomal_S7"/>
    <property type="match status" value="1"/>
</dbReference>
<dbReference type="PIRSF" id="PIRSF002122">
    <property type="entry name" value="RPS7p_RPS7a_RPS5e_RPS7o"/>
    <property type="match status" value="1"/>
</dbReference>
<dbReference type="SUPFAM" id="SSF47973">
    <property type="entry name" value="Ribosomal protein S7"/>
    <property type="match status" value="1"/>
</dbReference>
<dbReference type="PROSITE" id="PS00052">
    <property type="entry name" value="RIBOSOMAL_S7"/>
    <property type="match status" value="1"/>
</dbReference>
<feature type="chain" id="PRO_1000125995" description="Small ribosomal subunit protein uS7">
    <location>
        <begin position="1"/>
        <end position="156"/>
    </location>
</feature>
<evidence type="ECO:0000255" key="1">
    <source>
        <dbReference type="HAMAP-Rule" id="MF_00480"/>
    </source>
</evidence>
<evidence type="ECO:0000305" key="2"/>
<comment type="function">
    <text evidence="1">One of the primary rRNA binding proteins, it binds directly to 16S rRNA where it nucleates assembly of the head domain of the 30S subunit. Is located at the subunit interface close to the decoding center, probably blocks exit of the E-site tRNA.</text>
</comment>
<comment type="subunit">
    <text evidence="1">Part of the 30S ribosomal subunit. Contacts proteins S9 and S11.</text>
</comment>
<comment type="similarity">
    <text evidence="1">Belongs to the universal ribosomal protein uS7 family.</text>
</comment>
<organism>
    <name type="scientific">Salmonella enteritidis PT4 (strain P125109)</name>
    <dbReference type="NCBI Taxonomy" id="550537"/>
    <lineage>
        <taxon>Bacteria</taxon>
        <taxon>Pseudomonadati</taxon>
        <taxon>Pseudomonadota</taxon>
        <taxon>Gammaproteobacteria</taxon>
        <taxon>Enterobacterales</taxon>
        <taxon>Enterobacteriaceae</taxon>
        <taxon>Salmonella</taxon>
    </lineage>
</organism>
<reference key="1">
    <citation type="journal article" date="2008" name="Genome Res.">
        <title>Comparative genome analysis of Salmonella enteritidis PT4 and Salmonella gallinarum 287/91 provides insights into evolutionary and host adaptation pathways.</title>
        <authorList>
            <person name="Thomson N.R."/>
            <person name="Clayton D.J."/>
            <person name="Windhorst D."/>
            <person name="Vernikos G."/>
            <person name="Davidson S."/>
            <person name="Churcher C."/>
            <person name="Quail M.A."/>
            <person name="Stevens M."/>
            <person name="Jones M.A."/>
            <person name="Watson M."/>
            <person name="Barron A."/>
            <person name="Layton A."/>
            <person name="Pickard D."/>
            <person name="Kingsley R.A."/>
            <person name="Bignell A."/>
            <person name="Clark L."/>
            <person name="Harris B."/>
            <person name="Ormond D."/>
            <person name="Abdellah Z."/>
            <person name="Brooks K."/>
            <person name="Cherevach I."/>
            <person name="Chillingworth T."/>
            <person name="Woodward J."/>
            <person name="Norberczak H."/>
            <person name="Lord A."/>
            <person name="Arrowsmith C."/>
            <person name="Jagels K."/>
            <person name="Moule S."/>
            <person name="Mungall K."/>
            <person name="Saunders M."/>
            <person name="Whitehead S."/>
            <person name="Chabalgoity J.A."/>
            <person name="Maskell D."/>
            <person name="Humphreys T."/>
            <person name="Roberts M."/>
            <person name="Barrow P.A."/>
            <person name="Dougan G."/>
            <person name="Parkhill J."/>
        </authorList>
    </citation>
    <scope>NUCLEOTIDE SEQUENCE [LARGE SCALE GENOMIC DNA]</scope>
    <source>
        <strain>P125109</strain>
    </source>
</reference>
<accession>B5R298</accession>
<proteinExistence type="inferred from homology"/>
<keyword id="KW-0687">Ribonucleoprotein</keyword>
<keyword id="KW-0689">Ribosomal protein</keyword>
<keyword id="KW-0694">RNA-binding</keyword>
<keyword id="KW-0699">rRNA-binding</keyword>
<keyword id="KW-0820">tRNA-binding</keyword>
<gene>
    <name evidence="1" type="primary">rpsG</name>
    <name type="ordered locus">SEN3275</name>
</gene>
<name>RS7_SALEP</name>